<comment type="function">
    <text evidence="1">Catalyzes the reduction of the glycolytic intermediate dihydroxyacetone phosphate (DHAP) to sn-glycerol 3-phosphate (G3P), the key precursor for phospholipid synthesis.</text>
</comment>
<comment type="catalytic activity">
    <reaction evidence="1">
        <text>sn-glycerol 3-phosphate + NAD(+) = dihydroxyacetone phosphate + NADH + H(+)</text>
        <dbReference type="Rhea" id="RHEA:11092"/>
        <dbReference type="ChEBI" id="CHEBI:15378"/>
        <dbReference type="ChEBI" id="CHEBI:57540"/>
        <dbReference type="ChEBI" id="CHEBI:57597"/>
        <dbReference type="ChEBI" id="CHEBI:57642"/>
        <dbReference type="ChEBI" id="CHEBI:57945"/>
        <dbReference type="EC" id="1.1.1.94"/>
    </reaction>
    <physiologicalReaction direction="right-to-left" evidence="1">
        <dbReference type="Rhea" id="RHEA:11094"/>
    </physiologicalReaction>
</comment>
<comment type="catalytic activity">
    <reaction evidence="1">
        <text>sn-glycerol 3-phosphate + NADP(+) = dihydroxyacetone phosphate + NADPH + H(+)</text>
        <dbReference type="Rhea" id="RHEA:11096"/>
        <dbReference type="ChEBI" id="CHEBI:15378"/>
        <dbReference type="ChEBI" id="CHEBI:57597"/>
        <dbReference type="ChEBI" id="CHEBI:57642"/>
        <dbReference type="ChEBI" id="CHEBI:57783"/>
        <dbReference type="ChEBI" id="CHEBI:58349"/>
        <dbReference type="EC" id="1.1.1.94"/>
    </reaction>
    <physiologicalReaction direction="right-to-left" evidence="1">
        <dbReference type="Rhea" id="RHEA:11098"/>
    </physiologicalReaction>
</comment>
<comment type="pathway">
    <text evidence="1">Membrane lipid metabolism; glycerophospholipid metabolism.</text>
</comment>
<comment type="subcellular location">
    <subcellularLocation>
        <location evidence="1">Cytoplasm</location>
    </subcellularLocation>
</comment>
<comment type="similarity">
    <text evidence="1">Belongs to the NAD-dependent glycerol-3-phosphate dehydrogenase family.</text>
</comment>
<sequence length="339" mass="36362">MNQRNASMTVIGAGSYGTALAITLARNGHEVVLWGHDPEHIATLERDRCNAAFLPDVPFPDTLHLESDLATALAASRNILVVVPSHVFGEVLRQIKPLMRPDARLVWATKGLEAETGRLLQDVAREALGDQIPLAVISGPTFAKELAAGLPTAISLASTDQTFADDLQQLLHCGKSFRVYSNPDFIGVQLGGAVKNVIAIGAGMSDGIGFGANARTALITRGLAEMSRLGAALGADPATFMGMAGLGDLVLTCTDNQSRNRRFGMMLGQGMDVQSAQEKIGQVVEGYRNTKEVRELAHRFGVEMPITEEIYQVLYCGKNAREAALTLLGRARKDERSSH</sequence>
<evidence type="ECO:0000255" key="1">
    <source>
        <dbReference type="HAMAP-Rule" id="MF_00394"/>
    </source>
</evidence>
<reference key="1">
    <citation type="journal article" date="2008" name="J. Bacteriol.">
        <title>The pangenome structure of Escherichia coli: comparative genomic analysis of E. coli commensal and pathogenic isolates.</title>
        <authorList>
            <person name="Rasko D.A."/>
            <person name="Rosovitz M.J."/>
            <person name="Myers G.S.A."/>
            <person name="Mongodin E.F."/>
            <person name="Fricke W.F."/>
            <person name="Gajer P."/>
            <person name="Crabtree J."/>
            <person name="Sebaihia M."/>
            <person name="Thomson N.R."/>
            <person name="Chaudhuri R."/>
            <person name="Henderson I.R."/>
            <person name="Sperandio V."/>
            <person name="Ravel J."/>
        </authorList>
    </citation>
    <scope>NUCLEOTIDE SEQUENCE [LARGE SCALE GENOMIC DNA]</scope>
    <source>
        <strain>E24377A / ETEC</strain>
    </source>
</reference>
<proteinExistence type="inferred from homology"/>
<dbReference type="EC" id="1.1.1.94" evidence="1"/>
<dbReference type="EMBL" id="CP000800">
    <property type="protein sequence ID" value="ABV18160.1"/>
    <property type="molecule type" value="Genomic_DNA"/>
</dbReference>
<dbReference type="RefSeq" id="WP_001076194.1">
    <property type="nucleotide sequence ID" value="NC_009801.1"/>
</dbReference>
<dbReference type="SMR" id="A7ZTG2"/>
<dbReference type="GeneID" id="93778322"/>
<dbReference type="KEGG" id="ecw:EcE24377A_4112"/>
<dbReference type="HOGENOM" id="CLU_033449_0_2_6"/>
<dbReference type="UniPathway" id="UPA00940"/>
<dbReference type="Proteomes" id="UP000001122">
    <property type="component" value="Chromosome"/>
</dbReference>
<dbReference type="GO" id="GO:0005829">
    <property type="term" value="C:cytosol"/>
    <property type="evidence" value="ECO:0007669"/>
    <property type="project" value="TreeGrafter"/>
</dbReference>
<dbReference type="GO" id="GO:0047952">
    <property type="term" value="F:glycerol-3-phosphate dehydrogenase [NAD(P)+] activity"/>
    <property type="evidence" value="ECO:0007669"/>
    <property type="project" value="UniProtKB-UniRule"/>
</dbReference>
<dbReference type="GO" id="GO:0051287">
    <property type="term" value="F:NAD binding"/>
    <property type="evidence" value="ECO:0007669"/>
    <property type="project" value="InterPro"/>
</dbReference>
<dbReference type="GO" id="GO:0005975">
    <property type="term" value="P:carbohydrate metabolic process"/>
    <property type="evidence" value="ECO:0007669"/>
    <property type="project" value="InterPro"/>
</dbReference>
<dbReference type="GO" id="GO:0046167">
    <property type="term" value="P:glycerol-3-phosphate biosynthetic process"/>
    <property type="evidence" value="ECO:0007669"/>
    <property type="project" value="UniProtKB-UniRule"/>
</dbReference>
<dbReference type="GO" id="GO:0046168">
    <property type="term" value="P:glycerol-3-phosphate catabolic process"/>
    <property type="evidence" value="ECO:0007669"/>
    <property type="project" value="InterPro"/>
</dbReference>
<dbReference type="GO" id="GO:0046474">
    <property type="term" value="P:glycerophospholipid biosynthetic process"/>
    <property type="evidence" value="ECO:0007669"/>
    <property type="project" value="TreeGrafter"/>
</dbReference>
<dbReference type="FunFam" id="1.10.1040.10:FF:000001">
    <property type="entry name" value="Glycerol-3-phosphate dehydrogenase [NAD(P)+]"/>
    <property type="match status" value="1"/>
</dbReference>
<dbReference type="FunFam" id="3.40.50.720:FF:000019">
    <property type="entry name" value="Glycerol-3-phosphate dehydrogenase [NAD(P)+]"/>
    <property type="match status" value="1"/>
</dbReference>
<dbReference type="Gene3D" id="1.10.1040.10">
    <property type="entry name" value="N-(1-d-carboxylethyl)-l-norvaline Dehydrogenase, domain 2"/>
    <property type="match status" value="1"/>
</dbReference>
<dbReference type="Gene3D" id="3.40.50.720">
    <property type="entry name" value="NAD(P)-binding Rossmann-like Domain"/>
    <property type="match status" value="1"/>
</dbReference>
<dbReference type="HAMAP" id="MF_00394">
    <property type="entry name" value="NAD_Glyc3P_dehydrog"/>
    <property type="match status" value="1"/>
</dbReference>
<dbReference type="InterPro" id="IPR008927">
    <property type="entry name" value="6-PGluconate_DH-like_C_sf"/>
</dbReference>
<dbReference type="InterPro" id="IPR013328">
    <property type="entry name" value="6PGD_dom2"/>
</dbReference>
<dbReference type="InterPro" id="IPR006168">
    <property type="entry name" value="G3P_DH_NAD-dep"/>
</dbReference>
<dbReference type="InterPro" id="IPR006109">
    <property type="entry name" value="G3P_DH_NAD-dep_C"/>
</dbReference>
<dbReference type="InterPro" id="IPR011128">
    <property type="entry name" value="G3P_DH_NAD-dep_N"/>
</dbReference>
<dbReference type="InterPro" id="IPR036291">
    <property type="entry name" value="NAD(P)-bd_dom_sf"/>
</dbReference>
<dbReference type="NCBIfam" id="NF000939">
    <property type="entry name" value="PRK00094.1-1"/>
    <property type="match status" value="1"/>
</dbReference>
<dbReference type="NCBIfam" id="NF000940">
    <property type="entry name" value="PRK00094.1-2"/>
    <property type="match status" value="1"/>
</dbReference>
<dbReference type="NCBIfam" id="NF000942">
    <property type="entry name" value="PRK00094.1-4"/>
    <property type="match status" value="1"/>
</dbReference>
<dbReference type="PANTHER" id="PTHR11728">
    <property type="entry name" value="GLYCEROL-3-PHOSPHATE DEHYDROGENASE"/>
    <property type="match status" value="1"/>
</dbReference>
<dbReference type="PANTHER" id="PTHR11728:SF1">
    <property type="entry name" value="GLYCEROL-3-PHOSPHATE DEHYDROGENASE [NAD(+)] 2, CHLOROPLASTIC"/>
    <property type="match status" value="1"/>
</dbReference>
<dbReference type="Pfam" id="PF07479">
    <property type="entry name" value="NAD_Gly3P_dh_C"/>
    <property type="match status" value="1"/>
</dbReference>
<dbReference type="Pfam" id="PF01210">
    <property type="entry name" value="NAD_Gly3P_dh_N"/>
    <property type="match status" value="1"/>
</dbReference>
<dbReference type="PIRSF" id="PIRSF000114">
    <property type="entry name" value="Glycerol-3-P_dh"/>
    <property type="match status" value="1"/>
</dbReference>
<dbReference type="PRINTS" id="PR00077">
    <property type="entry name" value="GPDHDRGNASE"/>
</dbReference>
<dbReference type="SUPFAM" id="SSF48179">
    <property type="entry name" value="6-phosphogluconate dehydrogenase C-terminal domain-like"/>
    <property type="match status" value="1"/>
</dbReference>
<dbReference type="SUPFAM" id="SSF51735">
    <property type="entry name" value="NAD(P)-binding Rossmann-fold domains"/>
    <property type="match status" value="1"/>
</dbReference>
<dbReference type="PROSITE" id="PS00957">
    <property type="entry name" value="NAD_G3PDH"/>
    <property type="match status" value="1"/>
</dbReference>
<name>GPDA_ECO24</name>
<organism>
    <name type="scientific">Escherichia coli O139:H28 (strain E24377A / ETEC)</name>
    <dbReference type="NCBI Taxonomy" id="331111"/>
    <lineage>
        <taxon>Bacteria</taxon>
        <taxon>Pseudomonadati</taxon>
        <taxon>Pseudomonadota</taxon>
        <taxon>Gammaproteobacteria</taxon>
        <taxon>Enterobacterales</taxon>
        <taxon>Enterobacteriaceae</taxon>
        <taxon>Escherichia</taxon>
    </lineage>
</organism>
<accession>A7ZTG2</accession>
<feature type="chain" id="PRO_1000060782" description="Glycerol-3-phosphate dehydrogenase [NAD(P)+]">
    <location>
        <begin position="1"/>
        <end position="339"/>
    </location>
</feature>
<feature type="active site" description="Proton acceptor" evidence="1">
    <location>
        <position position="195"/>
    </location>
</feature>
<feature type="binding site" evidence="1">
    <location>
        <position position="15"/>
    </location>
    <ligand>
        <name>NADPH</name>
        <dbReference type="ChEBI" id="CHEBI:57783"/>
    </ligand>
</feature>
<feature type="binding site" evidence="1">
    <location>
        <position position="16"/>
    </location>
    <ligand>
        <name>NADPH</name>
        <dbReference type="ChEBI" id="CHEBI:57783"/>
    </ligand>
</feature>
<feature type="binding site" evidence="1">
    <location>
        <position position="36"/>
    </location>
    <ligand>
        <name>NADPH</name>
        <dbReference type="ChEBI" id="CHEBI:57783"/>
    </ligand>
</feature>
<feature type="binding site" evidence="1">
    <location>
        <position position="110"/>
    </location>
    <ligand>
        <name>NADPH</name>
        <dbReference type="ChEBI" id="CHEBI:57783"/>
    </ligand>
</feature>
<feature type="binding site" evidence="1">
    <location>
        <position position="110"/>
    </location>
    <ligand>
        <name>sn-glycerol 3-phosphate</name>
        <dbReference type="ChEBI" id="CHEBI:57597"/>
    </ligand>
</feature>
<feature type="binding site" evidence="1">
    <location>
        <position position="139"/>
    </location>
    <ligand>
        <name>sn-glycerol 3-phosphate</name>
        <dbReference type="ChEBI" id="CHEBI:57597"/>
    </ligand>
</feature>
<feature type="binding site" evidence="1">
    <location>
        <position position="141"/>
    </location>
    <ligand>
        <name>sn-glycerol 3-phosphate</name>
        <dbReference type="ChEBI" id="CHEBI:57597"/>
    </ligand>
</feature>
<feature type="binding site" evidence="1">
    <location>
        <position position="143"/>
    </location>
    <ligand>
        <name>NADPH</name>
        <dbReference type="ChEBI" id="CHEBI:57783"/>
    </ligand>
</feature>
<feature type="binding site" evidence="1">
    <location>
        <position position="195"/>
    </location>
    <ligand>
        <name>sn-glycerol 3-phosphate</name>
        <dbReference type="ChEBI" id="CHEBI:57597"/>
    </ligand>
</feature>
<feature type="binding site" evidence="1">
    <location>
        <position position="248"/>
    </location>
    <ligand>
        <name>sn-glycerol 3-phosphate</name>
        <dbReference type="ChEBI" id="CHEBI:57597"/>
    </ligand>
</feature>
<feature type="binding site" evidence="1">
    <location>
        <position position="258"/>
    </location>
    <ligand>
        <name>sn-glycerol 3-phosphate</name>
        <dbReference type="ChEBI" id="CHEBI:57597"/>
    </ligand>
</feature>
<feature type="binding site" evidence="1">
    <location>
        <position position="259"/>
    </location>
    <ligand>
        <name>NADPH</name>
        <dbReference type="ChEBI" id="CHEBI:57783"/>
    </ligand>
</feature>
<feature type="binding site" evidence="1">
    <location>
        <position position="259"/>
    </location>
    <ligand>
        <name>sn-glycerol 3-phosphate</name>
        <dbReference type="ChEBI" id="CHEBI:57597"/>
    </ligand>
</feature>
<feature type="binding site" evidence="1">
    <location>
        <position position="260"/>
    </location>
    <ligand>
        <name>sn-glycerol 3-phosphate</name>
        <dbReference type="ChEBI" id="CHEBI:57597"/>
    </ligand>
</feature>
<feature type="binding site" evidence="1">
    <location>
        <position position="283"/>
    </location>
    <ligand>
        <name>NADPH</name>
        <dbReference type="ChEBI" id="CHEBI:57783"/>
    </ligand>
</feature>
<feature type="binding site" evidence="1">
    <location>
        <position position="285"/>
    </location>
    <ligand>
        <name>NADPH</name>
        <dbReference type="ChEBI" id="CHEBI:57783"/>
    </ligand>
</feature>
<keyword id="KW-0963">Cytoplasm</keyword>
<keyword id="KW-0444">Lipid biosynthesis</keyword>
<keyword id="KW-0443">Lipid metabolism</keyword>
<keyword id="KW-0520">NAD</keyword>
<keyword id="KW-0521">NADP</keyword>
<keyword id="KW-0547">Nucleotide-binding</keyword>
<keyword id="KW-0560">Oxidoreductase</keyword>
<keyword id="KW-0594">Phospholipid biosynthesis</keyword>
<keyword id="KW-1208">Phospholipid metabolism</keyword>
<keyword id="KW-1185">Reference proteome</keyword>
<protein>
    <recommendedName>
        <fullName evidence="1">Glycerol-3-phosphate dehydrogenase [NAD(P)+]</fullName>
        <ecNumber evidence="1">1.1.1.94</ecNumber>
    </recommendedName>
    <alternativeName>
        <fullName evidence="1">NAD(P)(+)-dependent glycerol-3-phosphate dehydrogenase</fullName>
    </alternativeName>
    <alternativeName>
        <fullName evidence="1">NAD(P)H-dependent dihydroxyacetone-phosphate reductase</fullName>
    </alternativeName>
</protein>
<gene>
    <name evidence="1" type="primary">gpsA</name>
    <name type="ordered locus">EcE24377A_4112</name>
</gene>